<protein>
    <recommendedName>
        <fullName>Acetyl-CoA acetyltransferase, cytosolic</fullName>
        <ecNumber evidence="2 5">2.3.1.9</ecNumber>
    </recommendedName>
    <alternativeName>
        <fullName>Acetyl-CoA transferase-like protein</fullName>
    </alternativeName>
    <alternativeName>
        <fullName>Cytosolic acetoacetyl-CoA thiolase</fullName>
    </alternativeName>
</protein>
<feature type="chain" id="PRO_0000206409" description="Acetyl-CoA acetyltransferase, cytosolic">
    <location>
        <begin position="1"/>
        <end position="397"/>
    </location>
</feature>
<feature type="active site" description="Acyl-thioester intermediate" evidence="9">
    <location>
        <position position="92"/>
    </location>
</feature>
<feature type="active site" description="Proton donor/acceptor" evidence="9">
    <location>
        <position position="383"/>
    </location>
</feature>
<feature type="binding site" evidence="4 11">
    <location>
        <position position="223"/>
    </location>
    <ligand>
        <name>CoA</name>
        <dbReference type="ChEBI" id="CHEBI:57287"/>
    </ligand>
</feature>
<feature type="binding site" evidence="4 11">
    <location>
        <position position="226"/>
    </location>
    <ligand>
        <name>CoA</name>
        <dbReference type="ChEBI" id="CHEBI:57287"/>
    </ligand>
</feature>
<feature type="binding site" evidence="4 11">
    <location>
        <position position="252"/>
    </location>
    <ligand>
        <name>CoA</name>
        <dbReference type="ChEBI" id="CHEBI:57287"/>
    </ligand>
</feature>
<feature type="site" description="Increases nucleophilicity of active site Cys" evidence="1">
    <location>
        <position position="353"/>
    </location>
</feature>
<feature type="modified residue" description="N-acetylmethionine" evidence="12 14 15">
    <location>
        <position position="1"/>
    </location>
</feature>
<feature type="modified residue" description="N6-acetyllysine" evidence="13">
    <location>
        <position position="200"/>
    </location>
</feature>
<feature type="modified residue" description="N6-acetyllysine" evidence="13">
    <location>
        <position position="233"/>
    </location>
</feature>
<feature type="modified residue" description="N6-acetyllysine" evidence="13">
    <location>
        <position position="235"/>
    </location>
</feature>
<feature type="splice variant" id="VSP_056217" description="In isoform 2." evidence="6">
    <original>MNAGSDPVVIVSAARTIIG</original>
    <variation>MGSHPVLRIWGNRRATAASLGRSGGRLSSPRLLRVVAPTLTFAQTSRC</variation>
    <location>
        <begin position="1"/>
        <end position="19"/>
    </location>
</feature>
<feature type="sequence variant" id="VAR_019686" description="In dbSNP:rs25683." evidence="3">
    <original>K</original>
    <variation>R</variation>
    <location>
        <position position="211"/>
    </location>
</feature>
<feature type="sequence conflict" description="In Ref. 1; AAB30856." evidence="8" ref="1">
    <original>K</original>
    <variation>T</variation>
    <location>
        <position position="169"/>
    </location>
</feature>
<feature type="sequence conflict" description="In Ref. 1; AAB30856." evidence="8" ref="1">
    <original>V</original>
    <variation>A</variation>
    <location>
        <position position="262"/>
    </location>
</feature>
<feature type="sequence conflict" description="In Ref. 2; AAM00223." evidence="8" ref="2">
    <original>R</original>
    <variation>G</variation>
    <location>
        <position position="375"/>
    </location>
</feature>
<feature type="strand" evidence="16">
    <location>
        <begin position="8"/>
        <end position="15"/>
    </location>
</feature>
<feature type="turn" evidence="16">
    <location>
        <begin position="24"/>
        <end position="27"/>
    </location>
</feature>
<feature type="helix" evidence="16">
    <location>
        <begin position="30"/>
        <end position="45"/>
    </location>
</feature>
<feature type="helix" evidence="16">
    <location>
        <begin position="49"/>
        <end position="51"/>
    </location>
</feature>
<feature type="strand" evidence="16">
    <location>
        <begin position="54"/>
        <end position="58"/>
    </location>
</feature>
<feature type="helix" evidence="16">
    <location>
        <begin position="69"/>
        <end position="76"/>
    </location>
</feature>
<feature type="strand" evidence="16">
    <location>
        <begin position="85"/>
        <end position="88"/>
    </location>
</feature>
<feature type="helix" evidence="16">
    <location>
        <begin position="91"/>
        <end position="93"/>
    </location>
</feature>
<feature type="helix" evidence="16">
    <location>
        <begin position="94"/>
        <end position="107"/>
    </location>
</feature>
<feature type="strand" evidence="16">
    <location>
        <begin position="112"/>
        <end position="122"/>
    </location>
</feature>
<feature type="strand" evidence="16">
    <location>
        <begin position="136"/>
        <end position="138"/>
    </location>
</feature>
<feature type="helix" evidence="16">
    <location>
        <begin position="145"/>
        <end position="149"/>
    </location>
</feature>
<feature type="turn" evidence="16">
    <location>
        <begin position="154"/>
        <end position="156"/>
    </location>
</feature>
<feature type="helix" evidence="16">
    <location>
        <begin position="160"/>
        <end position="171"/>
    </location>
</feature>
<feature type="helix" evidence="16">
    <location>
        <begin position="175"/>
        <end position="194"/>
    </location>
</feature>
<feature type="turn" evidence="16">
    <location>
        <begin position="195"/>
        <end position="201"/>
    </location>
</feature>
<feature type="strand" evidence="16">
    <location>
        <begin position="205"/>
        <end position="209"/>
    </location>
</feature>
<feature type="strand" evidence="16">
    <location>
        <begin position="212"/>
        <end position="216"/>
    </location>
</feature>
<feature type="helix" evidence="16">
    <location>
        <begin position="228"/>
        <end position="232"/>
    </location>
</feature>
<feature type="turn" evidence="17">
    <location>
        <begin position="240"/>
        <end position="243"/>
    </location>
</feature>
<feature type="helix" evidence="17">
    <location>
        <begin position="248"/>
        <end position="250"/>
    </location>
</feature>
<feature type="strand" evidence="16">
    <location>
        <begin position="255"/>
        <end position="265"/>
    </location>
</feature>
<feature type="helix" evidence="16">
    <location>
        <begin position="266"/>
        <end position="271"/>
    </location>
</feature>
<feature type="strand" evidence="16">
    <location>
        <begin position="277"/>
        <end position="287"/>
    </location>
</feature>
<feature type="helix" evidence="16">
    <location>
        <begin position="290"/>
        <end position="295"/>
    </location>
</feature>
<feature type="helix" evidence="16">
    <location>
        <begin position="297"/>
        <end position="308"/>
    </location>
</feature>
<feature type="helix" evidence="16">
    <location>
        <begin position="312"/>
        <end position="314"/>
    </location>
</feature>
<feature type="strand" evidence="16">
    <location>
        <begin position="317"/>
        <end position="320"/>
    </location>
</feature>
<feature type="helix" evidence="16">
    <location>
        <begin position="325"/>
        <end position="335"/>
    </location>
</feature>
<feature type="helix" evidence="16">
    <location>
        <begin position="339"/>
        <end position="341"/>
    </location>
</feature>
<feature type="helix" evidence="16">
    <location>
        <begin position="348"/>
        <end position="351"/>
    </location>
</feature>
<feature type="turn" evidence="16">
    <location>
        <begin position="355"/>
        <end position="357"/>
    </location>
</feature>
<feature type="helix" evidence="16">
    <location>
        <begin position="358"/>
        <end position="373"/>
    </location>
</feature>
<feature type="strand" evidence="16">
    <location>
        <begin position="377"/>
        <end position="384"/>
    </location>
</feature>
<feature type="turn" evidence="16">
    <location>
        <begin position="385"/>
        <end position="387"/>
    </location>
</feature>
<feature type="strand" evidence="16">
    <location>
        <begin position="388"/>
        <end position="396"/>
    </location>
</feature>
<proteinExistence type="evidence at protein level"/>
<comment type="function">
    <text evidence="7">Involved in the biosynthetic pathway of cholesterol.</text>
</comment>
<comment type="catalytic activity">
    <reaction evidence="2 5">
        <text>2 acetyl-CoA = acetoacetyl-CoA + CoA</text>
        <dbReference type="Rhea" id="RHEA:21036"/>
        <dbReference type="ChEBI" id="CHEBI:57286"/>
        <dbReference type="ChEBI" id="CHEBI:57287"/>
        <dbReference type="ChEBI" id="CHEBI:57288"/>
        <dbReference type="EC" id="2.3.1.9"/>
    </reaction>
    <physiologicalReaction direction="right-to-left" evidence="10">
        <dbReference type="Rhea" id="RHEA:21038"/>
    </physiologicalReaction>
</comment>
<comment type="pathway">
    <text evidence="5">Lipid metabolism; fatty acid metabolism.</text>
</comment>
<comment type="subunit">
    <text evidence="4">Homotetramer.</text>
</comment>
<comment type="interaction">
    <interactant intactId="EBI-1047273">
        <id>Q9BWD1</id>
    </interactant>
    <interactant intactId="EBI-739832">
        <id>Q8TBB1</id>
        <label>LNX1</label>
    </interactant>
    <organismsDiffer>false</organismsDiffer>
    <experiments>3</experiments>
</comment>
<comment type="interaction">
    <interactant intactId="EBI-1047273">
        <id>Q9BWD1</id>
    </interactant>
    <interactant intactId="EBI-710997">
        <id>P54274</id>
        <label>TERF1</label>
    </interactant>
    <organismsDiffer>false</organismsDiffer>
    <experiments>2</experiments>
</comment>
<comment type="interaction">
    <interactant intactId="EBI-1047273">
        <id>Q9BWD1</id>
    </interactant>
    <interactant intactId="EBI-12040603">
        <id>Q9NZC7-5</id>
        <label>WWOX</label>
    </interactant>
    <organismsDiffer>false</organismsDiffer>
    <experiments>3</experiments>
</comment>
<comment type="interaction">
    <interactant intactId="EBI-1047273">
        <id>Q9BWD1</id>
    </interactant>
    <interactant intactId="EBI-7254550">
        <id>P36508</id>
        <label>ZNF76</label>
    </interactant>
    <organismsDiffer>false</organismsDiffer>
    <experiments>3</experiments>
</comment>
<comment type="subcellular location">
    <subcellularLocation>
        <location evidence="10">Cytoplasm</location>
        <location evidence="10">Cytosol</location>
    </subcellularLocation>
</comment>
<comment type="alternative products">
    <event type="alternative splicing"/>
    <isoform>
        <id>Q9BWD1-1</id>
        <name>1</name>
        <sequence type="displayed"/>
    </isoform>
    <isoform>
        <id>Q9BWD1-2</id>
        <name>2</name>
        <sequence type="described" ref="VSP_056217"/>
    </isoform>
</comment>
<comment type="similarity">
    <text evidence="8">Belongs to the thiolase-like superfamily. Thiolase family.</text>
</comment>
<name>THIC_HUMAN</name>
<accession>Q9BWD1</accession>
<accession>B7Z233</accession>
<accession>E1P5B1</accession>
<accession>Q16146</accession>
<accession>Q5TCL7</accession>
<accession>Q8TDM4</accession>
<keyword id="KW-0002">3D-structure</keyword>
<keyword id="KW-0007">Acetylation</keyword>
<keyword id="KW-0012">Acyltransferase</keyword>
<keyword id="KW-0025">Alternative splicing</keyword>
<keyword id="KW-0963">Cytoplasm</keyword>
<keyword id="KW-0903">Direct protein sequencing</keyword>
<keyword id="KW-1267">Proteomics identification</keyword>
<keyword id="KW-1185">Reference proteome</keyword>
<keyword id="KW-0808">Transferase</keyword>
<evidence type="ECO:0000250" key="1">
    <source>
        <dbReference type="UniProtKB" id="P42765"/>
    </source>
</evidence>
<evidence type="ECO:0000255" key="2">
    <source>
        <dbReference type="PROSITE-ProRule" id="PRU10020"/>
    </source>
</evidence>
<evidence type="ECO:0000269" key="3">
    <source>
    </source>
</evidence>
<evidence type="ECO:0000269" key="4">
    <source>
    </source>
</evidence>
<evidence type="ECO:0000269" key="5">
    <source>
    </source>
</evidence>
<evidence type="ECO:0000303" key="6">
    <source>
    </source>
</evidence>
<evidence type="ECO:0000303" key="7">
    <source>
    </source>
</evidence>
<evidence type="ECO:0000305" key="8"/>
<evidence type="ECO:0000305" key="9">
    <source>
    </source>
</evidence>
<evidence type="ECO:0000305" key="10">
    <source>
    </source>
</evidence>
<evidence type="ECO:0007744" key="11">
    <source>
        <dbReference type="PDB" id="1WL4"/>
    </source>
</evidence>
<evidence type="ECO:0007744" key="12">
    <source>
    </source>
</evidence>
<evidence type="ECO:0007744" key="13">
    <source>
    </source>
</evidence>
<evidence type="ECO:0007744" key="14">
    <source>
    </source>
</evidence>
<evidence type="ECO:0007744" key="15">
    <source>
    </source>
</evidence>
<evidence type="ECO:0007829" key="16">
    <source>
        <dbReference type="PDB" id="1WL4"/>
    </source>
</evidence>
<evidence type="ECO:0007829" key="17">
    <source>
        <dbReference type="PDB" id="1WL5"/>
    </source>
</evidence>
<reference key="1">
    <citation type="journal article" date="1994" name="Biochem. Biophys. Res. Commun.">
        <title>Molecular cloning and nucleotide sequence of complementary DNA for human hepatic cytosolic acetoacetyl-coenzyme A thiolase.</title>
        <authorList>
            <person name="Song X.-Q."/>
            <person name="Fukao T."/>
            <person name="Yamaguchi S."/>
            <person name="Miyazawa S."/>
            <person name="Hashimoto T."/>
            <person name="Orii T."/>
        </authorList>
    </citation>
    <scope>NUCLEOTIDE SEQUENCE [MRNA] (ISOFORM 1)</scope>
    <scope>PARTIAL PROTEIN SEQUENCE</scope>
    <scope>CATALYTIC ACTIVITY</scope>
    <scope>PATHWAY</scope>
    <scope>SUBCELLULAR LOCATION</scope>
</reference>
<reference key="2">
    <citation type="submission" date="2001-03" db="EMBL/GenBank/DDBJ databases">
        <title>Identification of the human acetyl CoA transferase like (ACTL) protein by yeast two-hybrid screen.</title>
        <authorList>
            <person name="Chen H."/>
            <person name="Peng J."/>
            <person name="Huang C.-H."/>
        </authorList>
    </citation>
    <scope>NUCLEOTIDE SEQUENCE [MRNA] (ISOFORM 1)</scope>
    <source>
        <tissue>Kidney</tissue>
    </source>
</reference>
<reference key="3">
    <citation type="journal article" date="2004" name="Nat. Genet.">
        <title>Complete sequencing and characterization of 21,243 full-length human cDNAs.</title>
        <authorList>
            <person name="Ota T."/>
            <person name="Suzuki Y."/>
            <person name="Nishikawa T."/>
            <person name="Otsuki T."/>
            <person name="Sugiyama T."/>
            <person name="Irie R."/>
            <person name="Wakamatsu A."/>
            <person name="Hayashi K."/>
            <person name="Sato H."/>
            <person name="Nagai K."/>
            <person name="Kimura K."/>
            <person name="Makita H."/>
            <person name="Sekine M."/>
            <person name="Obayashi M."/>
            <person name="Nishi T."/>
            <person name="Shibahara T."/>
            <person name="Tanaka T."/>
            <person name="Ishii S."/>
            <person name="Yamamoto J."/>
            <person name="Saito K."/>
            <person name="Kawai Y."/>
            <person name="Isono Y."/>
            <person name="Nakamura Y."/>
            <person name="Nagahari K."/>
            <person name="Murakami K."/>
            <person name="Yasuda T."/>
            <person name="Iwayanagi T."/>
            <person name="Wagatsuma M."/>
            <person name="Shiratori A."/>
            <person name="Sudo H."/>
            <person name="Hosoiri T."/>
            <person name="Kaku Y."/>
            <person name="Kodaira H."/>
            <person name="Kondo H."/>
            <person name="Sugawara M."/>
            <person name="Takahashi M."/>
            <person name="Kanda K."/>
            <person name="Yokoi T."/>
            <person name="Furuya T."/>
            <person name="Kikkawa E."/>
            <person name="Omura Y."/>
            <person name="Abe K."/>
            <person name="Kamihara K."/>
            <person name="Katsuta N."/>
            <person name="Sato K."/>
            <person name="Tanikawa M."/>
            <person name="Yamazaki M."/>
            <person name="Ninomiya K."/>
            <person name="Ishibashi T."/>
            <person name="Yamashita H."/>
            <person name="Murakawa K."/>
            <person name="Fujimori K."/>
            <person name="Tanai H."/>
            <person name="Kimata M."/>
            <person name="Watanabe M."/>
            <person name="Hiraoka S."/>
            <person name="Chiba Y."/>
            <person name="Ishida S."/>
            <person name="Ono Y."/>
            <person name="Takiguchi S."/>
            <person name="Watanabe S."/>
            <person name="Yosida M."/>
            <person name="Hotuta T."/>
            <person name="Kusano J."/>
            <person name="Kanehori K."/>
            <person name="Takahashi-Fujii A."/>
            <person name="Hara H."/>
            <person name="Tanase T.-O."/>
            <person name="Nomura Y."/>
            <person name="Togiya S."/>
            <person name="Komai F."/>
            <person name="Hara R."/>
            <person name="Takeuchi K."/>
            <person name="Arita M."/>
            <person name="Imose N."/>
            <person name="Musashino K."/>
            <person name="Yuuki H."/>
            <person name="Oshima A."/>
            <person name="Sasaki N."/>
            <person name="Aotsuka S."/>
            <person name="Yoshikawa Y."/>
            <person name="Matsunawa H."/>
            <person name="Ichihara T."/>
            <person name="Shiohata N."/>
            <person name="Sano S."/>
            <person name="Moriya S."/>
            <person name="Momiyama H."/>
            <person name="Satoh N."/>
            <person name="Takami S."/>
            <person name="Terashima Y."/>
            <person name="Suzuki O."/>
            <person name="Nakagawa S."/>
            <person name="Senoh A."/>
            <person name="Mizoguchi H."/>
            <person name="Goto Y."/>
            <person name="Shimizu F."/>
            <person name="Wakebe H."/>
            <person name="Hishigaki H."/>
            <person name="Watanabe T."/>
            <person name="Sugiyama A."/>
            <person name="Takemoto M."/>
            <person name="Kawakami B."/>
            <person name="Yamazaki M."/>
            <person name="Watanabe K."/>
            <person name="Kumagai A."/>
            <person name="Itakura S."/>
            <person name="Fukuzumi Y."/>
            <person name="Fujimori Y."/>
            <person name="Komiyama M."/>
            <person name="Tashiro H."/>
            <person name="Tanigami A."/>
            <person name="Fujiwara T."/>
            <person name="Ono T."/>
            <person name="Yamada K."/>
            <person name="Fujii Y."/>
            <person name="Ozaki K."/>
            <person name="Hirao M."/>
            <person name="Ohmori Y."/>
            <person name="Kawabata A."/>
            <person name="Hikiji T."/>
            <person name="Kobatake N."/>
            <person name="Inagaki H."/>
            <person name="Ikema Y."/>
            <person name="Okamoto S."/>
            <person name="Okitani R."/>
            <person name="Kawakami T."/>
            <person name="Noguchi S."/>
            <person name="Itoh T."/>
            <person name="Shigeta K."/>
            <person name="Senba T."/>
            <person name="Matsumura K."/>
            <person name="Nakajima Y."/>
            <person name="Mizuno T."/>
            <person name="Morinaga M."/>
            <person name="Sasaki M."/>
            <person name="Togashi T."/>
            <person name="Oyama M."/>
            <person name="Hata H."/>
            <person name="Watanabe M."/>
            <person name="Komatsu T."/>
            <person name="Mizushima-Sugano J."/>
            <person name="Satoh T."/>
            <person name="Shirai Y."/>
            <person name="Takahashi Y."/>
            <person name="Nakagawa K."/>
            <person name="Okumura K."/>
            <person name="Nagase T."/>
            <person name="Nomura N."/>
            <person name="Kikuchi H."/>
            <person name="Masuho Y."/>
            <person name="Yamashita R."/>
            <person name="Nakai K."/>
            <person name="Yada T."/>
            <person name="Nakamura Y."/>
            <person name="Ohara O."/>
            <person name="Isogai T."/>
            <person name="Sugano S."/>
        </authorList>
    </citation>
    <scope>NUCLEOTIDE SEQUENCE [LARGE SCALE MRNA] (ISOFORM 2)</scope>
    <source>
        <tissue>Amygdala</tissue>
    </source>
</reference>
<reference key="4">
    <citation type="journal article" date="2003" name="Nature">
        <title>The DNA sequence and analysis of human chromosome 6.</title>
        <authorList>
            <person name="Mungall A.J."/>
            <person name="Palmer S.A."/>
            <person name="Sims S.K."/>
            <person name="Edwards C.A."/>
            <person name="Ashurst J.L."/>
            <person name="Wilming L."/>
            <person name="Jones M.C."/>
            <person name="Horton R."/>
            <person name="Hunt S.E."/>
            <person name="Scott C.E."/>
            <person name="Gilbert J.G.R."/>
            <person name="Clamp M.E."/>
            <person name="Bethel G."/>
            <person name="Milne S."/>
            <person name="Ainscough R."/>
            <person name="Almeida J.P."/>
            <person name="Ambrose K.D."/>
            <person name="Andrews T.D."/>
            <person name="Ashwell R.I.S."/>
            <person name="Babbage A.K."/>
            <person name="Bagguley C.L."/>
            <person name="Bailey J."/>
            <person name="Banerjee R."/>
            <person name="Barker D.J."/>
            <person name="Barlow K.F."/>
            <person name="Bates K."/>
            <person name="Beare D.M."/>
            <person name="Beasley H."/>
            <person name="Beasley O."/>
            <person name="Bird C.P."/>
            <person name="Blakey S.E."/>
            <person name="Bray-Allen S."/>
            <person name="Brook J."/>
            <person name="Brown A.J."/>
            <person name="Brown J.Y."/>
            <person name="Burford D.C."/>
            <person name="Burrill W."/>
            <person name="Burton J."/>
            <person name="Carder C."/>
            <person name="Carter N.P."/>
            <person name="Chapman J.C."/>
            <person name="Clark S.Y."/>
            <person name="Clark G."/>
            <person name="Clee C.M."/>
            <person name="Clegg S."/>
            <person name="Cobley V."/>
            <person name="Collier R.E."/>
            <person name="Collins J.E."/>
            <person name="Colman L.K."/>
            <person name="Corby N.R."/>
            <person name="Coville G.J."/>
            <person name="Culley K.M."/>
            <person name="Dhami P."/>
            <person name="Davies J."/>
            <person name="Dunn M."/>
            <person name="Earthrowl M.E."/>
            <person name="Ellington A.E."/>
            <person name="Evans K.A."/>
            <person name="Faulkner L."/>
            <person name="Francis M.D."/>
            <person name="Frankish A."/>
            <person name="Frankland J."/>
            <person name="French L."/>
            <person name="Garner P."/>
            <person name="Garnett J."/>
            <person name="Ghori M.J."/>
            <person name="Gilby L.M."/>
            <person name="Gillson C.J."/>
            <person name="Glithero R.J."/>
            <person name="Grafham D.V."/>
            <person name="Grant M."/>
            <person name="Gribble S."/>
            <person name="Griffiths C."/>
            <person name="Griffiths M.N.D."/>
            <person name="Hall R."/>
            <person name="Halls K.S."/>
            <person name="Hammond S."/>
            <person name="Harley J.L."/>
            <person name="Hart E.A."/>
            <person name="Heath P.D."/>
            <person name="Heathcott R."/>
            <person name="Holmes S.J."/>
            <person name="Howden P.J."/>
            <person name="Howe K.L."/>
            <person name="Howell G.R."/>
            <person name="Huckle E."/>
            <person name="Humphray S.J."/>
            <person name="Humphries M.D."/>
            <person name="Hunt A.R."/>
            <person name="Johnson C.M."/>
            <person name="Joy A.A."/>
            <person name="Kay M."/>
            <person name="Keenan S.J."/>
            <person name="Kimberley A.M."/>
            <person name="King A."/>
            <person name="Laird G.K."/>
            <person name="Langford C."/>
            <person name="Lawlor S."/>
            <person name="Leongamornlert D.A."/>
            <person name="Leversha M."/>
            <person name="Lloyd C.R."/>
            <person name="Lloyd D.M."/>
            <person name="Loveland J.E."/>
            <person name="Lovell J."/>
            <person name="Martin S."/>
            <person name="Mashreghi-Mohammadi M."/>
            <person name="Maslen G.L."/>
            <person name="Matthews L."/>
            <person name="McCann O.T."/>
            <person name="McLaren S.J."/>
            <person name="McLay K."/>
            <person name="McMurray A."/>
            <person name="Moore M.J.F."/>
            <person name="Mullikin J.C."/>
            <person name="Niblett D."/>
            <person name="Nickerson T."/>
            <person name="Novik K.L."/>
            <person name="Oliver K."/>
            <person name="Overton-Larty E.K."/>
            <person name="Parker A."/>
            <person name="Patel R."/>
            <person name="Pearce A.V."/>
            <person name="Peck A.I."/>
            <person name="Phillimore B.J.C.T."/>
            <person name="Phillips S."/>
            <person name="Plumb R.W."/>
            <person name="Porter K.M."/>
            <person name="Ramsey Y."/>
            <person name="Ranby S.A."/>
            <person name="Rice C.M."/>
            <person name="Ross M.T."/>
            <person name="Searle S.M."/>
            <person name="Sehra H.K."/>
            <person name="Sheridan E."/>
            <person name="Skuce C.D."/>
            <person name="Smith S."/>
            <person name="Smith M."/>
            <person name="Spraggon L."/>
            <person name="Squares S.L."/>
            <person name="Steward C.A."/>
            <person name="Sycamore N."/>
            <person name="Tamlyn-Hall G."/>
            <person name="Tester J."/>
            <person name="Theaker A.J."/>
            <person name="Thomas D.W."/>
            <person name="Thorpe A."/>
            <person name="Tracey A."/>
            <person name="Tromans A."/>
            <person name="Tubby B."/>
            <person name="Wall M."/>
            <person name="Wallis J.M."/>
            <person name="West A.P."/>
            <person name="White S.S."/>
            <person name="Whitehead S.L."/>
            <person name="Whittaker H."/>
            <person name="Wild A."/>
            <person name="Willey D.J."/>
            <person name="Wilmer T.E."/>
            <person name="Wood J.M."/>
            <person name="Wray P.W."/>
            <person name="Wyatt J.C."/>
            <person name="Young L."/>
            <person name="Younger R.M."/>
            <person name="Bentley D.R."/>
            <person name="Coulson A."/>
            <person name="Durbin R.M."/>
            <person name="Hubbard T."/>
            <person name="Sulston J.E."/>
            <person name="Dunham I."/>
            <person name="Rogers J."/>
            <person name="Beck S."/>
        </authorList>
    </citation>
    <scope>NUCLEOTIDE SEQUENCE [LARGE SCALE GENOMIC DNA]</scope>
</reference>
<reference key="5">
    <citation type="submission" date="2005-09" db="EMBL/GenBank/DDBJ databases">
        <authorList>
            <person name="Mural R.J."/>
            <person name="Istrail S."/>
            <person name="Sutton G.G."/>
            <person name="Florea L."/>
            <person name="Halpern A.L."/>
            <person name="Mobarry C.M."/>
            <person name="Lippert R."/>
            <person name="Walenz B."/>
            <person name="Shatkay H."/>
            <person name="Dew I."/>
            <person name="Miller J.R."/>
            <person name="Flanigan M.J."/>
            <person name="Edwards N.J."/>
            <person name="Bolanos R."/>
            <person name="Fasulo D."/>
            <person name="Halldorsson B.V."/>
            <person name="Hannenhalli S."/>
            <person name="Turner R."/>
            <person name="Yooseph S."/>
            <person name="Lu F."/>
            <person name="Nusskern D.R."/>
            <person name="Shue B.C."/>
            <person name="Zheng X.H."/>
            <person name="Zhong F."/>
            <person name="Delcher A.L."/>
            <person name="Huson D.H."/>
            <person name="Kravitz S.A."/>
            <person name="Mouchard L."/>
            <person name="Reinert K."/>
            <person name="Remington K.A."/>
            <person name="Clark A.G."/>
            <person name="Waterman M.S."/>
            <person name="Eichler E.E."/>
            <person name="Adams M.D."/>
            <person name="Hunkapiller M.W."/>
            <person name="Myers E.W."/>
            <person name="Venter J.C."/>
        </authorList>
    </citation>
    <scope>NUCLEOTIDE SEQUENCE [LARGE SCALE GENOMIC DNA]</scope>
</reference>
<reference key="6">
    <citation type="journal article" date="2004" name="Genome Res.">
        <title>The status, quality, and expansion of the NIH full-length cDNA project: the Mammalian Gene Collection (MGC).</title>
        <authorList>
            <consortium name="The MGC Project Team"/>
        </authorList>
    </citation>
    <scope>NUCLEOTIDE SEQUENCE [LARGE SCALE MRNA] (ISOFORM 1)</scope>
    <scope>VARIANT ARG-211</scope>
    <source>
        <tissue>Lung</tissue>
    </source>
</reference>
<reference key="7">
    <citation type="submission" date="2008-12" db="UniProtKB">
        <authorList>
            <person name="Lubec G."/>
            <person name="Afjehi-Sadat L."/>
            <person name="Chen W.-Q."/>
            <person name="Sun Y."/>
        </authorList>
    </citation>
    <scope>PROTEIN SEQUENCE OF 16-39; 195-210; 280-302 AND 342-361</scope>
    <scope>IDENTIFICATION BY MASS SPECTROMETRY</scope>
    <source>
        <tissue>Brain</tissue>
        <tissue>Cajal-Retzius cell</tissue>
        <tissue>Fetal brain cortex</tissue>
    </source>
</reference>
<reference key="8">
    <citation type="journal article" date="2009" name="Anal. Chem.">
        <title>Lys-N and trypsin cover complementary parts of the phosphoproteome in a refined SCX-based approach.</title>
        <authorList>
            <person name="Gauci S."/>
            <person name="Helbig A.O."/>
            <person name="Slijper M."/>
            <person name="Krijgsveld J."/>
            <person name="Heck A.J."/>
            <person name="Mohammed S."/>
        </authorList>
    </citation>
    <scope>ACETYLATION [LARGE SCALE ANALYSIS] AT MET-1</scope>
    <scope>IDENTIFICATION BY MASS SPECTROMETRY [LARGE SCALE ANALYSIS]</scope>
</reference>
<reference key="9">
    <citation type="journal article" date="2009" name="Science">
        <title>Lysine acetylation targets protein complexes and co-regulates major cellular functions.</title>
        <authorList>
            <person name="Choudhary C."/>
            <person name="Kumar C."/>
            <person name="Gnad F."/>
            <person name="Nielsen M.L."/>
            <person name="Rehman M."/>
            <person name="Walther T.C."/>
            <person name="Olsen J.V."/>
            <person name="Mann M."/>
        </authorList>
    </citation>
    <scope>ACETYLATION [LARGE SCALE ANALYSIS] AT LYS-200; LYS-233 AND LYS-235</scope>
    <scope>IDENTIFICATION BY MASS SPECTROMETRY [LARGE SCALE ANALYSIS]</scope>
</reference>
<reference key="10">
    <citation type="journal article" date="2011" name="BMC Syst. Biol.">
        <title>Initial characterization of the human central proteome.</title>
        <authorList>
            <person name="Burkard T.R."/>
            <person name="Planyavsky M."/>
            <person name="Kaupe I."/>
            <person name="Breitwieser F.P."/>
            <person name="Buerckstuemmer T."/>
            <person name="Bennett K.L."/>
            <person name="Superti-Furga G."/>
            <person name="Colinge J."/>
        </authorList>
    </citation>
    <scope>IDENTIFICATION BY MASS SPECTROMETRY [LARGE SCALE ANALYSIS]</scope>
</reference>
<reference key="11">
    <citation type="journal article" date="2012" name="Mol. Cell. Proteomics">
        <title>Comparative large-scale characterisation of plant vs. mammal proteins reveals similar and idiosyncratic N-alpha acetylation features.</title>
        <authorList>
            <person name="Bienvenut W.V."/>
            <person name="Sumpton D."/>
            <person name="Martinez A."/>
            <person name="Lilla S."/>
            <person name="Espagne C."/>
            <person name="Meinnel T."/>
            <person name="Giglione C."/>
        </authorList>
    </citation>
    <scope>ACETYLATION [LARGE SCALE ANALYSIS] AT MET-1</scope>
    <scope>IDENTIFICATION BY MASS SPECTROMETRY [LARGE SCALE ANALYSIS]</scope>
</reference>
<reference key="12">
    <citation type="journal article" date="2012" name="Proc. Natl. Acad. Sci. U.S.A.">
        <title>N-terminal acetylome analyses and functional insights of the N-terminal acetyltransferase NatB.</title>
        <authorList>
            <person name="Van Damme P."/>
            <person name="Lasa M."/>
            <person name="Polevoda B."/>
            <person name="Gazquez C."/>
            <person name="Elosegui-Artola A."/>
            <person name="Kim D.S."/>
            <person name="De Juan-Pardo E."/>
            <person name="Demeyer K."/>
            <person name="Hole K."/>
            <person name="Larrea E."/>
            <person name="Timmerman E."/>
            <person name="Prieto J."/>
            <person name="Arnesen T."/>
            <person name="Sherman F."/>
            <person name="Gevaert K."/>
            <person name="Aldabe R."/>
        </authorList>
    </citation>
    <scope>ACETYLATION [LARGE SCALE ANALYSIS] AT MET-1</scope>
    <scope>IDENTIFICATION BY MASS SPECTROMETRY [LARGE SCALE ANALYSIS]</scope>
</reference>
<reference key="13">
    <citation type="journal article" date="2014" name="J. Proteomics">
        <title>An enzyme assisted RP-RPLC approach for in-depth analysis of human liver phosphoproteome.</title>
        <authorList>
            <person name="Bian Y."/>
            <person name="Song C."/>
            <person name="Cheng K."/>
            <person name="Dong M."/>
            <person name="Wang F."/>
            <person name="Huang J."/>
            <person name="Sun D."/>
            <person name="Wang L."/>
            <person name="Ye M."/>
            <person name="Zou H."/>
        </authorList>
    </citation>
    <scope>IDENTIFICATION BY MASS SPECTROMETRY [LARGE SCALE ANALYSIS]</scope>
    <source>
        <tissue>Liver</tissue>
    </source>
</reference>
<reference key="14">
    <citation type="journal article" date="2015" name="Proteomics">
        <title>N-terminome analysis of the human mitochondrial proteome.</title>
        <authorList>
            <person name="Vaca Jacome A.S."/>
            <person name="Rabilloud T."/>
            <person name="Schaeffer-Reiss C."/>
            <person name="Rompais M."/>
            <person name="Ayoub D."/>
            <person name="Lane L."/>
            <person name="Bairoch A."/>
            <person name="Van Dorsselaer A."/>
            <person name="Carapito C."/>
        </authorList>
    </citation>
    <scope>IDENTIFICATION BY MASS SPECTROMETRY [LARGE SCALE ANALYSIS]</scope>
</reference>
<reference key="15">
    <citation type="journal article" date="2005" name="J. Mol. Biol.">
        <title>High resolution crystal structures of human cytosolic thiolase (CT): a comparison of the active sites of human CT, bacterial thiolase, and bacterial KAS I.</title>
        <authorList>
            <person name="Kursula P."/>
            <person name="Sikkila H."/>
            <person name="Fukao T."/>
            <person name="Kondo N."/>
            <person name="Wierenga R.K."/>
        </authorList>
    </citation>
    <scope>X-RAY CRYSTALLOGRAPHY (1.55 ANGSTROMS) IN COMPLEX WITH COENZYME A</scope>
    <scope>FUNCTION</scope>
    <scope>SUBUNIT</scope>
    <scope>ACTIVE SITE</scope>
</reference>
<sequence length="397" mass="41351">MNAGSDPVVIVSAARTIIGSFNGALAAVPVQDLGSTVIKEVLKRATVAPEDVSEVIFGHVLAAGCGQNPVRQASVGAGIPYSVPAWSCQMICGSGLKAVCLAVQSIGIGDSSIVVAGGMENMSKAPHLAYLRTGVKIGEMPLTDSILCDGLTDAFHNCHMGITAENVAKKWQVSREDQDKVAVLSQNRTENAQKAGHFDKEIVPVLVSTRKGLIEVKTDEFPRHGSNIEAMSKLKPYFLTDGTGTVTPANASGINDGAAAVVLMKKSEADKRGLTPLARIVSWSQVGVEPSIMGIGPIPAIKQAVTKAGWSLEDVDIFEINEAFAAVSAAIVKELGLNPEKVNIEGGAIALGHPLGASGCRILVTLLHTLERMGRSRGVAALCIGGGMGIAMCVQRE</sequence>
<dbReference type="EC" id="2.3.1.9" evidence="2 5"/>
<dbReference type="EMBL" id="S70154">
    <property type="protein sequence ID" value="AAB30856.1"/>
    <property type="molecule type" value="mRNA"/>
</dbReference>
<dbReference type="EMBL" id="AF356877">
    <property type="protein sequence ID" value="AAM00223.1"/>
    <property type="molecule type" value="mRNA"/>
</dbReference>
<dbReference type="EMBL" id="AK294273">
    <property type="protein sequence ID" value="BAH11719.1"/>
    <property type="molecule type" value="mRNA"/>
</dbReference>
<dbReference type="EMBL" id="AL135914">
    <property type="status" value="NOT_ANNOTATED_CDS"/>
    <property type="molecule type" value="Genomic_DNA"/>
</dbReference>
<dbReference type="EMBL" id="CH471051">
    <property type="protein sequence ID" value="EAW47619.1"/>
    <property type="molecule type" value="Genomic_DNA"/>
</dbReference>
<dbReference type="EMBL" id="CH471051">
    <property type="protein sequence ID" value="EAW47620.1"/>
    <property type="molecule type" value="Genomic_DNA"/>
</dbReference>
<dbReference type="EMBL" id="BC000408">
    <property type="protein sequence ID" value="AAH00408.1"/>
    <property type="molecule type" value="mRNA"/>
</dbReference>
<dbReference type="CCDS" id="CCDS5268.1">
    <molecule id="Q9BWD1-1"/>
</dbReference>
<dbReference type="PIR" id="JC2378">
    <property type="entry name" value="JC2378"/>
</dbReference>
<dbReference type="RefSeq" id="NP_001290182.1">
    <molecule id="Q9BWD1-2"/>
    <property type="nucleotide sequence ID" value="NM_001303253.1"/>
</dbReference>
<dbReference type="RefSeq" id="NP_005882.2">
    <molecule id="Q9BWD1-1"/>
    <property type="nucleotide sequence ID" value="NM_005891.3"/>
</dbReference>
<dbReference type="PDB" id="1WL4">
    <property type="method" value="X-ray"/>
    <property type="resolution" value="1.55 A"/>
    <property type="chains" value="A=1-397"/>
</dbReference>
<dbReference type="PDB" id="1WL5">
    <property type="method" value="X-ray"/>
    <property type="resolution" value="2.26 A"/>
    <property type="chains" value="A=1-397"/>
</dbReference>
<dbReference type="PDBsum" id="1WL4"/>
<dbReference type="PDBsum" id="1WL5"/>
<dbReference type="SMR" id="Q9BWD1"/>
<dbReference type="BioGRID" id="106557">
    <property type="interactions" value="71"/>
</dbReference>
<dbReference type="FunCoup" id="Q9BWD1">
    <property type="interactions" value="799"/>
</dbReference>
<dbReference type="IntAct" id="Q9BWD1">
    <property type="interactions" value="11"/>
</dbReference>
<dbReference type="MINT" id="Q9BWD1"/>
<dbReference type="STRING" id="9606.ENSP00000356015"/>
<dbReference type="BindingDB" id="Q9BWD1"/>
<dbReference type="ChEMBL" id="CHEMBL2240"/>
<dbReference type="DrugBank" id="DB01992">
    <property type="generic name" value="Coenzyme A"/>
</dbReference>
<dbReference type="DrugBank" id="DB01915">
    <property type="generic name" value="S-Hydroxycysteine"/>
</dbReference>
<dbReference type="GuidetoPHARMACOLOGY" id="2436"/>
<dbReference type="SwissLipids" id="SLP:000001266"/>
<dbReference type="GlyCosmos" id="Q9BWD1">
    <property type="glycosylation" value="1 site, 1 glycan"/>
</dbReference>
<dbReference type="GlyGen" id="Q9BWD1">
    <property type="glycosylation" value="2 sites, 1 O-linked glycan (1 site)"/>
</dbReference>
<dbReference type="iPTMnet" id="Q9BWD1"/>
<dbReference type="PhosphoSitePlus" id="Q9BWD1"/>
<dbReference type="SwissPalm" id="Q9BWD1"/>
<dbReference type="BioMuta" id="ACAT2"/>
<dbReference type="DMDM" id="52000838"/>
<dbReference type="OGP" id="Q9BWD1"/>
<dbReference type="REPRODUCTION-2DPAGE" id="IPI00291419"/>
<dbReference type="jPOST" id="Q9BWD1"/>
<dbReference type="MassIVE" id="Q9BWD1"/>
<dbReference type="PaxDb" id="9606-ENSP00000356015"/>
<dbReference type="PeptideAtlas" id="Q9BWD1"/>
<dbReference type="ProteomicsDB" id="6403"/>
<dbReference type="ProteomicsDB" id="79268">
    <molecule id="Q9BWD1-1"/>
</dbReference>
<dbReference type="Pumba" id="Q9BWD1"/>
<dbReference type="Antibodypedia" id="20022">
    <property type="antibodies" value="491 antibodies from 30 providers"/>
</dbReference>
<dbReference type="DNASU" id="39"/>
<dbReference type="Ensembl" id="ENST00000367048.5">
    <molecule id="Q9BWD1-1"/>
    <property type="protein sequence ID" value="ENSP00000356015.4"/>
    <property type="gene ID" value="ENSG00000120437.9"/>
</dbReference>
<dbReference type="GeneID" id="39"/>
<dbReference type="KEGG" id="hsa:39"/>
<dbReference type="MANE-Select" id="ENST00000367048.5">
    <property type="protein sequence ID" value="ENSP00000356015.4"/>
    <property type="RefSeq nucleotide sequence ID" value="NM_005891.3"/>
    <property type="RefSeq protein sequence ID" value="NP_005882.2"/>
</dbReference>
<dbReference type="UCSC" id="uc010kjy.4">
    <molecule id="Q9BWD1-1"/>
    <property type="organism name" value="human"/>
</dbReference>
<dbReference type="AGR" id="HGNC:94"/>
<dbReference type="CTD" id="39"/>
<dbReference type="DisGeNET" id="39"/>
<dbReference type="GeneCards" id="ACAT2"/>
<dbReference type="HGNC" id="HGNC:94">
    <property type="gene designation" value="ACAT2"/>
</dbReference>
<dbReference type="HPA" id="ENSG00000120437">
    <property type="expression patterns" value="Tissue enriched (liver)"/>
</dbReference>
<dbReference type="MalaCards" id="ACAT2"/>
<dbReference type="MIM" id="100678">
    <property type="type" value="gene+phenotype"/>
</dbReference>
<dbReference type="neXtProt" id="NX_Q9BWD1"/>
<dbReference type="OpenTargets" id="ENSG00000120437"/>
<dbReference type="PharmGKB" id="PA19"/>
<dbReference type="VEuPathDB" id="HostDB:ENSG00000120437"/>
<dbReference type="eggNOG" id="KOG1390">
    <property type="taxonomic scope" value="Eukaryota"/>
</dbReference>
<dbReference type="GeneTree" id="ENSGT01030000234626"/>
<dbReference type="HOGENOM" id="CLU_031026_0_0_1"/>
<dbReference type="InParanoid" id="Q9BWD1"/>
<dbReference type="OMA" id="ICPSIAI"/>
<dbReference type="OrthoDB" id="5404651at2759"/>
<dbReference type="PAN-GO" id="Q9BWD1">
    <property type="GO annotations" value="3 GO annotations based on evolutionary models"/>
</dbReference>
<dbReference type="PhylomeDB" id="Q9BWD1"/>
<dbReference type="TreeFam" id="TF300650"/>
<dbReference type="BioCyc" id="MetaCyc:ENSG00000120437-MONOMER"/>
<dbReference type="BRENDA" id="2.3.1.9">
    <property type="organism ID" value="2681"/>
</dbReference>
<dbReference type="PathwayCommons" id="Q9BWD1"/>
<dbReference type="Reactome" id="R-HSA-191273">
    <property type="pathway name" value="Cholesterol biosynthesis"/>
</dbReference>
<dbReference type="SignaLink" id="Q9BWD1"/>
<dbReference type="UniPathway" id="UPA00199"/>
<dbReference type="BioGRID-ORCS" id="39">
    <property type="hits" value="19 hits in 1165 CRISPR screens"/>
</dbReference>
<dbReference type="ChiTaRS" id="ACAT2">
    <property type="organism name" value="human"/>
</dbReference>
<dbReference type="EvolutionaryTrace" id="Q9BWD1"/>
<dbReference type="GeneWiki" id="ACAT2"/>
<dbReference type="GenomeRNAi" id="39"/>
<dbReference type="Pharos" id="Q9BWD1">
    <property type="development level" value="Tchem"/>
</dbReference>
<dbReference type="PRO" id="PR:Q9BWD1"/>
<dbReference type="Proteomes" id="UP000005640">
    <property type="component" value="Chromosome 6"/>
</dbReference>
<dbReference type="RNAct" id="Q9BWD1">
    <property type="molecule type" value="protein"/>
</dbReference>
<dbReference type="Bgee" id="ENSG00000120437">
    <property type="expression patterns" value="Expressed in ventricular zone and 205 other cell types or tissues"/>
</dbReference>
<dbReference type="GO" id="GO:0005737">
    <property type="term" value="C:cytoplasm"/>
    <property type="evidence" value="ECO:0000314"/>
    <property type="project" value="BHF-UCL"/>
</dbReference>
<dbReference type="GO" id="GO:0005829">
    <property type="term" value="C:cytosol"/>
    <property type="evidence" value="ECO:0000304"/>
    <property type="project" value="Reactome"/>
</dbReference>
<dbReference type="GO" id="GO:0070062">
    <property type="term" value="C:extracellular exosome"/>
    <property type="evidence" value="ECO:0007005"/>
    <property type="project" value="UniProtKB"/>
</dbReference>
<dbReference type="GO" id="GO:0003985">
    <property type="term" value="F:acetyl-CoA C-acetyltransferase activity"/>
    <property type="evidence" value="ECO:0000314"/>
    <property type="project" value="BHF-UCL"/>
</dbReference>
<dbReference type="GO" id="GO:0006631">
    <property type="term" value="P:fatty acid metabolic process"/>
    <property type="evidence" value="ECO:0007669"/>
    <property type="project" value="UniProtKB-UniPathway"/>
</dbReference>
<dbReference type="GO" id="GO:0006629">
    <property type="term" value="P:lipid metabolic process"/>
    <property type="evidence" value="ECO:0000304"/>
    <property type="project" value="ProtInc"/>
</dbReference>
<dbReference type="CDD" id="cd00751">
    <property type="entry name" value="thiolase"/>
    <property type="match status" value="1"/>
</dbReference>
<dbReference type="FunFam" id="3.40.47.10:FF:000010">
    <property type="entry name" value="Acetyl-CoA acetyltransferase (Thiolase)"/>
    <property type="match status" value="1"/>
</dbReference>
<dbReference type="Gene3D" id="3.40.47.10">
    <property type="match status" value="2"/>
</dbReference>
<dbReference type="InterPro" id="IPR002155">
    <property type="entry name" value="Thiolase"/>
</dbReference>
<dbReference type="InterPro" id="IPR016039">
    <property type="entry name" value="Thiolase-like"/>
</dbReference>
<dbReference type="InterPro" id="IPR020610">
    <property type="entry name" value="Thiolase_AS"/>
</dbReference>
<dbReference type="InterPro" id="IPR020617">
    <property type="entry name" value="Thiolase_C"/>
</dbReference>
<dbReference type="InterPro" id="IPR020613">
    <property type="entry name" value="Thiolase_CS"/>
</dbReference>
<dbReference type="InterPro" id="IPR020616">
    <property type="entry name" value="Thiolase_N"/>
</dbReference>
<dbReference type="NCBIfam" id="TIGR01930">
    <property type="entry name" value="AcCoA-C-Actrans"/>
    <property type="match status" value="1"/>
</dbReference>
<dbReference type="PANTHER" id="PTHR18919:SF107">
    <property type="entry name" value="ACETYL-COA ACETYLTRANSFERASE, CYTOSOLIC"/>
    <property type="match status" value="1"/>
</dbReference>
<dbReference type="PANTHER" id="PTHR18919">
    <property type="entry name" value="ACETYL-COA C-ACYLTRANSFERASE"/>
    <property type="match status" value="1"/>
</dbReference>
<dbReference type="Pfam" id="PF02803">
    <property type="entry name" value="Thiolase_C"/>
    <property type="match status" value="1"/>
</dbReference>
<dbReference type="Pfam" id="PF00108">
    <property type="entry name" value="Thiolase_N"/>
    <property type="match status" value="1"/>
</dbReference>
<dbReference type="PIRSF" id="PIRSF000429">
    <property type="entry name" value="Ac-CoA_Ac_transf"/>
    <property type="match status" value="1"/>
</dbReference>
<dbReference type="SUPFAM" id="SSF53901">
    <property type="entry name" value="Thiolase-like"/>
    <property type="match status" value="2"/>
</dbReference>
<dbReference type="PROSITE" id="PS00737">
    <property type="entry name" value="THIOLASE_2"/>
    <property type="match status" value="1"/>
</dbReference>
<dbReference type="PROSITE" id="PS00099">
    <property type="entry name" value="THIOLASE_3"/>
    <property type="match status" value="1"/>
</dbReference>
<organism>
    <name type="scientific">Homo sapiens</name>
    <name type="common">Human</name>
    <dbReference type="NCBI Taxonomy" id="9606"/>
    <lineage>
        <taxon>Eukaryota</taxon>
        <taxon>Metazoa</taxon>
        <taxon>Chordata</taxon>
        <taxon>Craniata</taxon>
        <taxon>Vertebrata</taxon>
        <taxon>Euteleostomi</taxon>
        <taxon>Mammalia</taxon>
        <taxon>Eutheria</taxon>
        <taxon>Euarchontoglires</taxon>
        <taxon>Primates</taxon>
        <taxon>Haplorrhini</taxon>
        <taxon>Catarrhini</taxon>
        <taxon>Hominidae</taxon>
        <taxon>Homo</taxon>
    </lineage>
</organism>
<gene>
    <name type="primary">ACAT2</name>
    <name type="synonym">ACTL</name>
</gene>